<sequence length="475" mass="51949">MRNYTQQYINGEWIDSDSNETIEVINPATEEVIGKVAKGNSNDVEKAVEAANNVYLEFRHSSVKERKELLDKIVEEYKNRKQDIIEAITDELGAPLTLSENVHYQMGLNHFEEASRALDSFEFEERRGDALVTKEAIGVSGLVTPWNFPTNQTSLKLAAAFAAGSPVVLKPSEETPFAAVILAEIFDKVGVPKGVFNLVNGDGEGVGNPLSEHPKVRMMSFTGSGRTGSKIMEKASKDFKKVSLELGGKSPYIVLDDVDVKEAAKATTGKVVNNTGQVCTAGTRILIPESKKEDFLTALKEEFSKVKVGDPREEGTQVGPIISKKQFDTVQSYIDKGIEEGAELFYGGPGKPEGLNTGYFARPTIFINVDNDMTIAQEEIFGPVASVITYNNLDEAIKIANDTKYGLAGYVIGKDKETLQKVARSIEAGRIEINEAGNQPDLPFGGYKQSGIGREWGDYGIEEFLEVKSIAGYFS</sequence>
<organism>
    <name type="scientific">Staphylococcus haemolyticus (strain JCSC1435)</name>
    <dbReference type="NCBI Taxonomy" id="279808"/>
    <lineage>
        <taxon>Bacteria</taxon>
        <taxon>Bacillati</taxon>
        <taxon>Bacillota</taxon>
        <taxon>Bacilli</taxon>
        <taxon>Bacillales</taxon>
        <taxon>Staphylococcaceae</taxon>
        <taxon>Staphylococcus</taxon>
    </lineage>
</organism>
<proteinExistence type="inferred from homology"/>
<evidence type="ECO:0000250" key="1"/>
<evidence type="ECO:0000305" key="2"/>
<protein>
    <recommendedName>
        <fullName>Putative aldehyde dehydrogenase SH0913</fullName>
        <ecNumber>1.2.1.3</ecNumber>
    </recommendedName>
</protein>
<name>ALD1_STAHJ</name>
<keyword id="KW-0520">NAD</keyword>
<keyword id="KW-0560">Oxidoreductase</keyword>
<accession>Q4L803</accession>
<dbReference type="EC" id="1.2.1.3"/>
<dbReference type="EMBL" id="AP006716">
    <property type="protein sequence ID" value="BAE04222.1"/>
    <property type="status" value="ALT_INIT"/>
    <property type="molecule type" value="Genomic_DNA"/>
</dbReference>
<dbReference type="RefSeq" id="WP_029376675.1">
    <property type="nucleotide sequence ID" value="NC_007168.1"/>
</dbReference>
<dbReference type="SMR" id="Q4L803"/>
<dbReference type="KEGG" id="sha:SH0913"/>
<dbReference type="eggNOG" id="COG1012">
    <property type="taxonomic scope" value="Bacteria"/>
</dbReference>
<dbReference type="HOGENOM" id="CLU_005391_0_0_9"/>
<dbReference type="OrthoDB" id="9762913at2"/>
<dbReference type="Proteomes" id="UP000000543">
    <property type="component" value="Chromosome"/>
</dbReference>
<dbReference type="GO" id="GO:0004029">
    <property type="term" value="F:aldehyde dehydrogenase (NAD+) activity"/>
    <property type="evidence" value="ECO:0007669"/>
    <property type="project" value="UniProtKB-EC"/>
</dbReference>
<dbReference type="CDD" id="cd07138">
    <property type="entry name" value="ALDH_CddD_SSP0762"/>
    <property type="match status" value="1"/>
</dbReference>
<dbReference type="FunFam" id="3.40.605.10:FF:000026">
    <property type="entry name" value="Aldehyde dehydrogenase, putative"/>
    <property type="match status" value="1"/>
</dbReference>
<dbReference type="FunFam" id="3.40.309.10:FF:000012">
    <property type="entry name" value="Betaine aldehyde dehydrogenase"/>
    <property type="match status" value="1"/>
</dbReference>
<dbReference type="FunFam" id="3.40.605.10:FF:000007">
    <property type="entry name" value="NAD/NADP-dependent betaine aldehyde dehydrogenase"/>
    <property type="match status" value="1"/>
</dbReference>
<dbReference type="Gene3D" id="3.40.605.10">
    <property type="entry name" value="Aldehyde Dehydrogenase, Chain A, domain 1"/>
    <property type="match status" value="1"/>
</dbReference>
<dbReference type="Gene3D" id="3.40.309.10">
    <property type="entry name" value="Aldehyde Dehydrogenase, Chain A, domain 2"/>
    <property type="match status" value="1"/>
</dbReference>
<dbReference type="InterPro" id="IPR016161">
    <property type="entry name" value="Ald_DH/histidinol_DH"/>
</dbReference>
<dbReference type="InterPro" id="IPR016163">
    <property type="entry name" value="Ald_DH_C"/>
</dbReference>
<dbReference type="InterPro" id="IPR016160">
    <property type="entry name" value="Ald_DH_CS_CYS"/>
</dbReference>
<dbReference type="InterPro" id="IPR029510">
    <property type="entry name" value="Ald_DH_CS_GLU"/>
</dbReference>
<dbReference type="InterPro" id="IPR016162">
    <property type="entry name" value="Ald_DH_N"/>
</dbReference>
<dbReference type="InterPro" id="IPR015590">
    <property type="entry name" value="Aldehyde_DH_dom"/>
</dbReference>
<dbReference type="PANTHER" id="PTHR42804">
    <property type="entry name" value="ALDEHYDE DEHYDROGENASE"/>
    <property type="match status" value="1"/>
</dbReference>
<dbReference type="PANTHER" id="PTHR42804:SF1">
    <property type="entry name" value="ALDEHYDE DEHYDROGENASE-RELATED"/>
    <property type="match status" value="1"/>
</dbReference>
<dbReference type="Pfam" id="PF00171">
    <property type="entry name" value="Aldedh"/>
    <property type="match status" value="1"/>
</dbReference>
<dbReference type="SUPFAM" id="SSF53720">
    <property type="entry name" value="ALDH-like"/>
    <property type="match status" value="1"/>
</dbReference>
<dbReference type="PROSITE" id="PS00070">
    <property type="entry name" value="ALDEHYDE_DEHYDR_CYS"/>
    <property type="match status" value="1"/>
</dbReference>
<dbReference type="PROSITE" id="PS00687">
    <property type="entry name" value="ALDEHYDE_DEHYDR_GLU"/>
    <property type="match status" value="1"/>
</dbReference>
<feature type="chain" id="PRO_0000293563" description="Putative aldehyde dehydrogenase SH0913">
    <location>
        <begin position="1"/>
        <end position="475"/>
    </location>
</feature>
<feature type="active site" evidence="1">
    <location>
        <position position="245"/>
    </location>
</feature>
<feature type="active site" evidence="1">
    <location>
        <position position="279"/>
    </location>
</feature>
<feature type="binding site" evidence="1">
    <location>
        <begin position="201"/>
        <end position="207"/>
    </location>
    <ligand>
        <name>NAD(+)</name>
        <dbReference type="ChEBI" id="CHEBI:57540"/>
    </ligand>
</feature>
<reference key="1">
    <citation type="journal article" date="2005" name="J. Bacteriol.">
        <title>Whole-genome sequencing of Staphylococcus haemolyticus uncovers the extreme plasticity of its genome and the evolution of human-colonizing staphylococcal species.</title>
        <authorList>
            <person name="Takeuchi F."/>
            <person name="Watanabe S."/>
            <person name="Baba T."/>
            <person name="Yuzawa H."/>
            <person name="Ito T."/>
            <person name="Morimoto Y."/>
            <person name="Kuroda M."/>
            <person name="Cui L."/>
            <person name="Takahashi M."/>
            <person name="Ankai A."/>
            <person name="Baba S."/>
            <person name="Fukui S."/>
            <person name="Lee J.C."/>
            <person name="Hiramatsu K."/>
        </authorList>
    </citation>
    <scope>NUCLEOTIDE SEQUENCE [LARGE SCALE GENOMIC DNA]</scope>
    <source>
        <strain>JCSC1435</strain>
    </source>
</reference>
<gene>
    <name type="ordered locus">SH0913</name>
</gene>
<comment type="catalytic activity">
    <reaction>
        <text>an aldehyde + NAD(+) + H2O = a carboxylate + NADH + 2 H(+)</text>
        <dbReference type="Rhea" id="RHEA:16185"/>
        <dbReference type="ChEBI" id="CHEBI:15377"/>
        <dbReference type="ChEBI" id="CHEBI:15378"/>
        <dbReference type="ChEBI" id="CHEBI:17478"/>
        <dbReference type="ChEBI" id="CHEBI:29067"/>
        <dbReference type="ChEBI" id="CHEBI:57540"/>
        <dbReference type="ChEBI" id="CHEBI:57945"/>
        <dbReference type="EC" id="1.2.1.3"/>
    </reaction>
</comment>
<comment type="similarity">
    <text evidence="2">Belongs to the aldehyde dehydrogenase family.</text>
</comment>
<comment type="sequence caution" evidence="2">
    <conflict type="erroneous initiation">
        <sequence resource="EMBL-CDS" id="BAE04222"/>
    </conflict>
</comment>